<evidence type="ECO:0000250" key="1">
    <source>
        <dbReference type="UniProtKB" id="Q6NRV0"/>
    </source>
</evidence>
<evidence type="ECO:0000250" key="2">
    <source>
        <dbReference type="UniProtKB" id="Q9BWF2"/>
    </source>
</evidence>
<evidence type="ECO:0000255" key="3"/>
<evidence type="ECO:0000255" key="4">
    <source>
        <dbReference type="PROSITE-ProRule" id="PRU00175"/>
    </source>
</evidence>
<evidence type="ECO:0000256" key="5">
    <source>
        <dbReference type="SAM" id="MobiDB-lite"/>
    </source>
</evidence>
<evidence type="ECO:0000269" key="6">
    <source>
    </source>
</evidence>
<evidence type="ECO:0000269" key="7">
    <source>
    </source>
</evidence>
<evidence type="ECO:0000303" key="8">
    <source>
    </source>
</evidence>
<evidence type="ECO:0000303" key="9">
    <source>
    </source>
</evidence>
<evidence type="ECO:0000305" key="10"/>
<evidence type="ECO:0000312" key="11">
    <source>
        <dbReference type="WormBase" id="B0432.13"/>
    </source>
</evidence>
<gene>
    <name evidence="8 9 11" type="primary">trul-1</name>
    <name evidence="11" type="ORF">B0432.13</name>
</gene>
<keyword id="KW-0158">Chromosome</keyword>
<keyword id="KW-0175">Coiled coil</keyword>
<keyword id="KW-0227">DNA damage</keyword>
<keyword id="KW-0234">DNA repair</keyword>
<keyword id="KW-0479">Metal-binding</keyword>
<keyword id="KW-0539">Nucleus</keyword>
<keyword id="KW-1185">Reference proteome</keyword>
<keyword id="KW-0808">Transferase</keyword>
<keyword id="KW-0833">Ubl conjugation pathway</keyword>
<keyword id="KW-0862">Zinc</keyword>
<keyword id="KW-0863">Zinc-finger</keyword>
<sequence>MTSQPTSSLQGSCSICFEDLKQNDKISAIVCGHIYHHGCISQWIATKRQCPSCRRTVPKNGFVEKLFFDVQRMGGEAEKPPEIDYREEHYKLSTSLKVEQEKLGTLNTENKNLKDTVKSLEKKIIREKDKYRQEIPKLQATINHLTISSEETAYLKRELQESKNRLKTCEFYKILTVHSSEADKQLGEYLKKNGNLDTEKFFQLMKSTNKDLTDKRREAAKEIEQLKMEVQSLKRAAQEDAAIKKTLKKTVLDLRERANVDTPINNKRLRDVLETETPPPAKRKSMGFDESSQMIDPDGELSFFKQNENRTPVTSVPSTSKAVLPFNFDDDEDDEYFKTPKIAEKKKKLPEAMAPVSEDSFDFDIAVPQSIINRIPAKTTAQPAKKYPKIPNLSAKTSSKPTEAPKTENVLKIKSKSQEIAQKPQKSTRISSFFSRTTSSTSNLTEYVILD</sequence>
<reference key="1">
    <citation type="journal article" date="1998" name="Science">
        <title>Genome sequence of the nematode C. elegans: a platform for investigating biology.</title>
        <authorList>
            <consortium name="The C. elegans sequencing consortium"/>
        </authorList>
    </citation>
    <scope>NUCLEOTIDE SEQUENCE [LARGE SCALE GENOMIC DNA]</scope>
    <source>
        <strain>Bristol N2</strain>
    </source>
</reference>
<reference key="2">
    <citation type="journal article" date="2019" name="Elife">
        <title>TRAIP drives replisome disassembly and mitotic DNA repair synthesis at sites of incomplete DNA replication.</title>
        <authorList>
            <person name="Sonneville R."/>
            <person name="Bhowmick R."/>
            <person name="Hoffmann S."/>
            <person name="Mailand N."/>
            <person name="Hickson I.D."/>
            <person name="Labib K."/>
        </authorList>
    </citation>
    <scope>FUNCTION</scope>
</reference>
<reference key="3">
    <citation type="journal article" date="2019" name="Mol. Cell">
        <title>Mitotic CDK Promotes replisome disassembly, fork breakage, and complex DNA rearrangements.</title>
        <authorList>
            <person name="Deng L."/>
            <person name="Wu R.A."/>
            <person name="Sonneville R."/>
            <person name="Kochenova O.V."/>
            <person name="Labib K."/>
            <person name="Pellman D."/>
            <person name="Walter J.C."/>
        </authorList>
    </citation>
    <scope>FUNCTION</scope>
</reference>
<organism>
    <name type="scientific">Caenorhabditis elegans</name>
    <dbReference type="NCBI Taxonomy" id="6239"/>
    <lineage>
        <taxon>Eukaryota</taxon>
        <taxon>Metazoa</taxon>
        <taxon>Ecdysozoa</taxon>
        <taxon>Nematoda</taxon>
        <taxon>Chromadorea</taxon>
        <taxon>Rhabditida</taxon>
        <taxon>Rhabditina</taxon>
        <taxon>Rhabditomorpha</taxon>
        <taxon>Rhabditoidea</taxon>
        <taxon>Rhabditidae</taxon>
        <taxon>Peloderinae</taxon>
        <taxon>Caenorhabditis</taxon>
    </lineage>
</organism>
<feature type="chain" id="PRO_0000451421" description="E3 ubiquitin-protein ligase trul-1">
    <location>
        <begin position="1"/>
        <end position="451"/>
    </location>
</feature>
<feature type="zinc finger region" description="RING-type; atypical" evidence="4">
    <location>
        <begin position="13"/>
        <end position="54"/>
    </location>
</feature>
<feature type="region of interest" description="Disordered" evidence="5">
    <location>
        <begin position="270"/>
        <end position="297"/>
    </location>
</feature>
<feature type="region of interest" description="Disordered" evidence="5">
    <location>
        <begin position="389"/>
        <end position="442"/>
    </location>
</feature>
<feature type="coiled-coil region" evidence="3">
    <location>
        <begin position="96"/>
        <end position="130"/>
    </location>
</feature>
<feature type="coiled-coil region" evidence="3">
    <location>
        <begin position="209"/>
        <end position="243"/>
    </location>
</feature>
<feature type="compositionally biased region" description="Low complexity" evidence="5">
    <location>
        <begin position="427"/>
        <end position="442"/>
    </location>
</feature>
<protein>
    <recommendedName>
        <fullName evidence="10">E3 ubiquitin-protein ligase trul-1</fullName>
        <ecNumber evidence="1">2.3.2.27</ecNumber>
    </recommendedName>
    <alternativeName>
        <fullName evidence="8 9">Traip ubiquitin ligase 1</fullName>
    </alternativeName>
</protein>
<dbReference type="EC" id="2.3.2.27" evidence="1"/>
<dbReference type="EMBL" id="BX284602">
    <property type="protein sequence ID" value="CCD61945.1"/>
    <property type="molecule type" value="Genomic_DNA"/>
</dbReference>
<dbReference type="PIR" id="T25457">
    <property type="entry name" value="T25457"/>
</dbReference>
<dbReference type="RefSeq" id="NP_001370339.1">
    <property type="nucleotide sequence ID" value="NM_001383776.2"/>
</dbReference>
<dbReference type="RefSeq" id="NP_740965.2">
    <property type="nucleotide sequence ID" value="NM_170969.4"/>
</dbReference>
<dbReference type="SMR" id="P90990"/>
<dbReference type="FunCoup" id="P90990">
    <property type="interactions" value="104"/>
</dbReference>
<dbReference type="STRING" id="6239.B0432.13.1"/>
<dbReference type="PaxDb" id="6239-B0432.13.2"/>
<dbReference type="EnsemblMetazoa" id="B0432.13.1">
    <property type="protein sequence ID" value="B0432.13.1"/>
    <property type="gene ID" value="WBGene00015194"/>
</dbReference>
<dbReference type="EnsemblMetazoa" id="B0432.13.2">
    <property type="protein sequence ID" value="B0432.13.2"/>
    <property type="gene ID" value="WBGene00015194"/>
</dbReference>
<dbReference type="GeneID" id="173412"/>
<dbReference type="UCSC" id="B0432.13.2">
    <property type="organism name" value="c. elegans"/>
</dbReference>
<dbReference type="AGR" id="WB:WBGene00015194"/>
<dbReference type="WormBase" id="B0432.13">
    <property type="protein sequence ID" value="CE40596"/>
    <property type="gene ID" value="WBGene00015194"/>
    <property type="gene designation" value="trul-1"/>
</dbReference>
<dbReference type="eggNOG" id="KOG0827">
    <property type="taxonomic scope" value="Eukaryota"/>
</dbReference>
<dbReference type="eggNOG" id="KOG3020">
    <property type="taxonomic scope" value="Eukaryota"/>
</dbReference>
<dbReference type="HOGENOM" id="CLU_025087_0_0_1"/>
<dbReference type="InParanoid" id="P90990"/>
<dbReference type="OMA" id="SHFIICK"/>
<dbReference type="OrthoDB" id="10250730at2759"/>
<dbReference type="PhylomeDB" id="P90990"/>
<dbReference type="Reactome" id="R-CEL-983168">
    <property type="pathway name" value="Antigen processing: Ubiquitination &amp; Proteasome degradation"/>
</dbReference>
<dbReference type="UniPathway" id="UPA00143"/>
<dbReference type="PRO" id="PR:P90990"/>
<dbReference type="Proteomes" id="UP000001940">
    <property type="component" value="Chromosome II"/>
</dbReference>
<dbReference type="Bgee" id="WBGene00015194">
    <property type="expression patterns" value="Expressed in adult organism and 4 other cell types or tissues"/>
</dbReference>
<dbReference type="GO" id="GO:0005634">
    <property type="term" value="C:nucleus"/>
    <property type="evidence" value="ECO:0000318"/>
    <property type="project" value="GO_Central"/>
</dbReference>
<dbReference type="GO" id="GO:0090734">
    <property type="term" value="C:site of DNA damage"/>
    <property type="evidence" value="ECO:0000318"/>
    <property type="project" value="GO_Central"/>
</dbReference>
<dbReference type="GO" id="GO:0061630">
    <property type="term" value="F:ubiquitin protein ligase activity"/>
    <property type="evidence" value="ECO:0000318"/>
    <property type="project" value="GO_Central"/>
</dbReference>
<dbReference type="GO" id="GO:0008270">
    <property type="term" value="F:zinc ion binding"/>
    <property type="evidence" value="ECO:0007669"/>
    <property type="project" value="UniProtKB-KW"/>
</dbReference>
<dbReference type="GO" id="GO:0006281">
    <property type="term" value="P:DNA repair"/>
    <property type="evidence" value="ECO:0007669"/>
    <property type="project" value="UniProtKB-KW"/>
</dbReference>
<dbReference type="GO" id="GO:0016567">
    <property type="term" value="P:protein ubiquitination"/>
    <property type="evidence" value="ECO:0000318"/>
    <property type="project" value="GO_Central"/>
</dbReference>
<dbReference type="GO" id="GO:0031297">
    <property type="term" value="P:replication fork processing"/>
    <property type="evidence" value="ECO:0000318"/>
    <property type="project" value="GO_Central"/>
</dbReference>
<dbReference type="CDD" id="cd16454">
    <property type="entry name" value="RING-H2_PA-TM-RING"/>
    <property type="match status" value="1"/>
</dbReference>
<dbReference type="Gene3D" id="3.30.40.10">
    <property type="entry name" value="Zinc/RING finger domain, C3HC4 (zinc finger)"/>
    <property type="match status" value="1"/>
</dbReference>
<dbReference type="InterPro" id="IPR052639">
    <property type="entry name" value="TRAIP_ubiq-protein_ligase"/>
</dbReference>
<dbReference type="InterPro" id="IPR001841">
    <property type="entry name" value="Znf_RING"/>
</dbReference>
<dbReference type="InterPro" id="IPR013083">
    <property type="entry name" value="Znf_RING/FYVE/PHD"/>
</dbReference>
<dbReference type="PANTHER" id="PTHR46569:SF1">
    <property type="entry name" value="E3 UBIQUITIN-PROTEIN LIGASE RFWD3-RELATED"/>
    <property type="match status" value="1"/>
</dbReference>
<dbReference type="PANTHER" id="PTHR46569">
    <property type="entry name" value="E3 UBIQUITIN-PROTEIN LIGASE TRAIP"/>
    <property type="match status" value="1"/>
</dbReference>
<dbReference type="Pfam" id="PF13639">
    <property type="entry name" value="zf-RING_2"/>
    <property type="match status" value="1"/>
</dbReference>
<dbReference type="SMART" id="SM00184">
    <property type="entry name" value="RING"/>
    <property type="match status" value="1"/>
</dbReference>
<dbReference type="SUPFAM" id="SSF57850">
    <property type="entry name" value="RING/U-box"/>
    <property type="match status" value="1"/>
</dbReference>
<dbReference type="PROSITE" id="PS50089">
    <property type="entry name" value="ZF_RING_2"/>
    <property type="match status" value="1"/>
</dbReference>
<comment type="function">
    <text evidence="6 7">E3 ubiquitin ligase that acts as a key regulator of DNA repair in response to replication stress (PubMed:30849395, PubMed:31545170). Acts by mediating ubiquitination of the CMG helicase complex, promoting the unloading of the CMG helicase complex by the p97 ATPase (cdc-48.1 or cdc-48.2) (PubMed:30849395, PubMed:31545170).</text>
</comment>
<comment type="catalytic activity">
    <reaction evidence="1">
        <text>S-ubiquitinyl-[E2 ubiquitin-conjugating enzyme]-L-cysteine + [acceptor protein]-L-lysine = [E2 ubiquitin-conjugating enzyme]-L-cysteine + N(6)-ubiquitinyl-[acceptor protein]-L-lysine.</text>
        <dbReference type="EC" id="2.3.2.27"/>
    </reaction>
</comment>
<comment type="pathway">
    <text evidence="1">Protein modification; protein ubiquitination.</text>
</comment>
<comment type="subcellular location">
    <subcellularLocation>
        <location evidence="2">Nucleus</location>
    </subcellularLocation>
    <subcellularLocation>
        <location evidence="1">Chromosome</location>
    </subcellularLocation>
</comment>
<comment type="similarity">
    <text evidence="10">Belongs to the TRAIP family.</text>
</comment>
<accession>P90990</accession>
<proteinExistence type="inferred from homology"/>
<name>TRUL_CAEEL</name>